<comment type="function">
    <text evidence="1">Catalyzes the condensation of pantoate with beta-alanine in an ATP-dependent reaction via a pantoyl-adenylate intermediate.</text>
</comment>
<comment type="catalytic activity">
    <reaction evidence="1">
        <text>(R)-pantoate + beta-alanine + ATP = (R)-pantothenate + AMP + diphosphate + H(+)</text>
        <dbReference type="Rhea" id="RHEA:10912"/>
        <dbReference type="ChEBI" id="CHEBI:15378"/>
        <dbReference type="ChEBI" id="CHEBI:15980"/>
        <dbReference type="ChEBI" id="CHEBI:29032"/>
        <dbReference type="ChEBI" id="CHEBI:30616"/>
        <dbReference type="ChEBI" id="CHEBI:33019"/>
        <dbReference type="ChEBI" id="CHEBI:57966"/>
        <dbReference type="ChEBI" id="CHEBI:456215"/>
        <dbReference type="EC" id="6.3.2.1"/>
    </reaction>
</comment>
<comment type="pathway">
    <text evidence="1">Cofactor biosynthesis; (R)-pantothenate biosynthesis; (R)-pantothenate from (R)-pantoate and beta-alanine: step 1/1.</text>
</comment>
<comment type="subunit">
    <text evidence="1">Homodimer.</text>
</comment>
<comment type="subcellular location">
    <subcellularLocation>
        <location evidence="1">Cytoplasm</location>
    </subcellularLocation>
</comment>
<comment type="miscellaneous">
    <text evidence="1">The reaction proceeds by a bi uni uni bi ping pong mechanism.</text>
</comment>
<comment type="similarity">
    <text evidence="1">Belongs to the pantothenate synthetase family.</text>
</comment>
<feature type="chain" id="PRO_1000118146" description="Pantothenate synthetase">
    <location>
        <begin position="1"/>
        <end position="283"/>
    </location>
</feature>
<feature type="active site" description="Proton donor" evidence="1">
    <location>
        <position position="37"/>
    </location>
</feature>
<feature type="binding site" evidence="1">
    <location>
        <begin position="30"/>
        <end position="37"/>
    </location>
    <ligand>
        <name>ATP</name>
        <dbReference type="ChEBI" id="CHEBI:30616"/>
    </ligand>
</feature>
<feature type="binding site" evidence="1">
    <location>
        <position position="61"/>
    </location>
    <ligand>
        <name>(R)-pantoate</name>
        <dbReference type="ChEBI" id="CHEBI:15980"/>
    </ligand>
</feature>
<feature type="binding site" evidence="1">
    <location>
        <position position="61"/>
    </location>
    <ligand>
        <name>beta-alanine</name>
        <dbReference type="ChEBI" id="CHEBI:57966"/>
    </ligand>
</feature>
<feature type="binding site" evidence="1">
    <location>
        <begin position="149"/>
        <end position="152"/>
    </location>
    <ligand>
        <name>ATP</name>
        <dbReference type="ChEBI" id="CHEBI:30616"/>
    </ligand>
</feature>
<feature type="binding site" evidence="1">
    <location>
        <position position="155"/>
    </location>
    <ligand>
        <name>(R)-pantoate</name>
        <dbReference type="ChEBI" id="CHEBI:15980"/>
    </ligand>
</feature>
<feature type="binding site" evidence="1">
    <location>
        <begin position="186"/>
        <end position="189"/>
    </location>
    <ligand>
        <name>ATP</name>
        <dbReference type="ChEBI" id="CHEBI:30616"/>
    </ligand>
</feature>
<evidence type="ECO:0000255" key="1">
    <source>
        <dbReference type="HAMAP-Rule" id="MF_00158"/>
    </source>
</evidence>
<organism>
    <name type="scientific">Escherichia coli O45:K1 (strain S88 / ExPEC)</name>
    <dbReference type="NCBI Taxonomy" id="585035"/>
    <lineage>
        <taxon>Bacteria</taxon>
        <taxon>Pseudomonadati</taxon>
        <taxon>Pseudomonadota</taxon>
        <taxon>Gammaproteobacteria</taxon>
        <taxon>Enterobacterales</taxon>
        <taxon>Enterobacteriaceae</taxon>
        <taxon>Escherichia</taxon>
    </lineage>
</organism>
<reference key="1">
    <citation type="journal article" date="2009" name="PLoS Genet.">
        <title>Organised genome dynamics in the Escherichia coli species results in highly diverse adaptive paths.</title>
        <authorList>
            <person name="Touchon M."/>
            <person name="Hoede C."/>
            <person name="Tenaillon O."/>
            <person name="Barbe V."/>
            <person name="Baeriswyl S."/>
            <person name="Bidet P."/>
            <person name="Bingen E."/>
            <person name="Bonacorsi S."/>
            <person name="Bouchier C."/>
            <person name="Bouvet O."/>
            <person name="Calteau A."/>
            <person name="Chiapello H."/>
            <person name="Clermont O."/>
            <person name="Cruveiller S."/>
            <person name="Danchin A."/>
            <person name="Diard M."/>
            <person name="Dossat C."/>
            <person name="Karoui M.E."/>
            <person name="Frapy E."/>
            <person name="Garry L."/>
            <person name="Ghigo J.M."/>
            <person name="Gilles A.M."/>
            <person name="Johnson J."/>
            <person name="Le Bouguenec C."/>
            <person name="Lescat M."/>
            <person name="Mangenot S."/>
            <person name="Martinez-Jehanne V."/>
            <person name="Matic I."/>
            <person name="Nassif X."/>
            <person name="Oztas S."/>
            <person name="Petit M.A."/>
            <person name="Pichon C."/>
            <person name="Rouy Z."/>
            <person name="Ruf C.S."/>
            <person name="Schneider D."/>
            <person name="Tourret J."/>
            <person name="Vacherie B."/>
            <person name="Vallenet D."/>
            <person name="Medigue C."/>
            <person name="Rocha E.P.C."/>
            <person name="Denamur E."/>
        </authorList>
    </citation>
    <scope>NUCLEOTIDE SEQUENCE [LARGE SCALE GENOMIC DNA]</scope>
    <source>
        <strain>S88 / ExPEC</strain>
    </source>
</reference>
<dbReference type="EC" id="6.3.2.1" evidence="1"/>
<dbReference type="EMBL" id="CU928161">
    <property type="protein sequence ID" value="CAR01508.1"/>
    <property type="molecule type" value="Genomic_DNA"/>
</dbReference>
<dbReference type="RefSeq" id="WP_000905358.1">
    <property type="nucleotide sequence ID" value="NC_011742.1"/>
</dbReference>
<dbReference type="SMR" id="B7MBB6"/>
<dbReference type="KEGG" id="ecz:ECS88_0143"/>
<dbReference type="HOGENOM" id="CLU_047148_0_0_6"/>
<dbReference type="UniPathway" id="UPA00028">
    <property type="reaction ID" value="UER00005"/>
</dbReference>
<dbReference type="Proteomes" id="UP000000747">
    <property type="component" value="Chromosome"/>
</dbReference>
<dbReference type="GO" id="GO:0005829">
    <property type="term" value="C:cytosol"/>
    <property type="evidence" value="ECO:0007669"/>
    <property type="project" value="TreeGrafter"/>
</dbReference>
<dbReference type="GO" id="GO:0005524">
    <property type="term" value="F:ATP binding"/>
    <property type="evidence" value="ECO:0007669"/>
    <property type="project" value="UniProtKB-KW"/>
</dbReference>
<dbReference type="GO" id="GO:0004592">
    <property type="term" value="F:pantoate-beta-alanine ligase activity"/>
    <property type="evidence" value="ECO:0007669"/>
    <property type="project" value="UniProtKB-UniRule"/>
</dbReference>
<dbReference type="GO" id="GO:0015940">
    <property type="term" value="P:pantothenate biosynthetic process"/>
    <property type="evidence" value="ECO:0007669"/>
    <property type="project" value="UniProtKB-UniRule"/>
</dbReference>
<dbReference type="CDD" id="cd00560">
    <property type="entry name" value="PanC"/>
    <property type="match status" value="1"/>
</dbReference>
<dbReference type="FunFam" id="3.30.1300.10:FF:000001">
    <property type="entry name" value="Pantothenate synthetase"/>
    <property type="match status" value="1"/>
</dbReference>
<dbReference type="FunFam" id="3.40.50.620:FF:000013">
    <property type="entry name" value="Pantothenate synthetase"/>
    <property type="match status" value="1"/>
</dbReference>
<dbReference type="Gene3D" id="3.40.50.620">
    <property type="entry name" value="HUPs"/>
    <property type="match status" value="1"/>
</dbReference>
<dbReference type="Gene3D" id="3.30.1300.10">
    <property type="entry name" value="Pantoate-beta-alanine ligase, C-terminal domain"/>
    <property type="match status" value="1"/>
</dbReference>
<dbReference type="HAMAP" id="MF_00158">
    <property type="entry name" value="PanC"/>
    <property type="match status" value="1"/>
</dbReference>
<dbReference type="InterPro" id="IPR004821">
    <property type="entry name" value="Cyt_trans-like"/>
</dbReference>
<dbReference type="InterPro" id="IPR003721">
    <property type="entry name" value="Pantoate_ligase"/>
</dbReference>
<dbReference type="InterPro" id="IPR042176">
    <property type="entry name" value="Pantoate_ligase_C"/>
</dbReference>
<dbReference type="InterPro" id="IPR014729">
    <property type="entry name" value="Rossmann-like_a/b/a_fold"/>
</dbReference>
<dbReference type="NCBIfam" id="TIGR00125">
    <property type="entry name" value="cyt_tran_rel"/>
    <property type="match status" value="1"/>
</dbReference>
<dbReference type="NCBIfam" id="TIGR00018">
    <property type="entry name" value="panC"/>
    <property type="match status" value="1"/>
</dbReference>
<dbReference type="PANTHER" id="PTHR21299">
    <property type="entry name" value="CYTIDYLATE KINASE/PANTOATE-BETA-ALANINE LIGASE"/>
    <property type="match status" value="1"/>
</dbReference>
<dbReference type="PANTHER" id="PTHR21299:SF1">
    <property type="entry name" value="PANTOATE--BETA-ALANINE LIGASE"/>
    <property type="match status" value="1"/>
</dbReference>
<dbReference type="Pfam" id="PF02569">
    <property type="entry name" value="Pantoate_ligase"/>
    <property type="match status" value="1"/>
</dbReference>
<dbReference type="SUPFAM" id="SSF52374">
    <property type="entry name" value="Nucleotidylyl transferase"/>
    <property type="match status" value="1"/>
</dbReference>
<name>PANC_ECO45</name>
<sequence>MLIIETLPLLRQQIRRLRMEGKRVALVPTMGNLHDGHMKLVDEAKAHADVVVVSIFVNPMQFDRPEDLARYPRTLQEDCEKLNKRKVDLVFAPSVKEIYPNGTETHTYVDVPGLSTMLEGASRPGHFRGVSTIVSKLFNLVQPDIACFGEKDFQQLALIRKMVADMGFDIEIVGVPIMRAKDGLALSSRNGYLTAEQRKIAPGLYKVLSSIADKLQAGERDLDEIIAIAGQELNEKGFRSDDIQIRDADTLLEVSENSKRAVILVAAWLGDARLIDNKLVELA</sequence>
<keyword id="KW-0067">ATP-binding</keyword>
<keyword id="KW-0963">Cytoplasm</keyword>
<keyword id="KW-0436">Ligase</keyword>
<keyword id="KW-0547">Nucleotide-binding</keyword>
<keyword id="KW-0566">Pantothenate biosynthesis</keyword>
<keyword id="KW-1185">Reference proteome</keyword>
<proteinExistence type="inferred from homology"/>
<gene>
    <name evidence="1" type="primary">panC</name>
    <name type="ordered locus">ECS88_0143</name>
</gene>
<protein>
    <recommendedName>
        <fullName evidence="1">Pantothenate synthetase</fullName>
        <shortName evidence="1">PS</shortName>
        <ecNumber evidence="1">6.3.2.1</ecNumber>
    </recommendedName>
    <alternativeName>
        <fullName evidence="1">Pantoate--beta-alanine ligase</fullName>
    </alternativeName>
    <alternativeName>
        <fullName evidence="1">Pantoate-activating enzyme</fullName>
    </alternativeName>
</protein>
<accession>B7MBB6</accession>